<feature type="signal peptide" evidence="1">
    <location>
        <begin position="1"/>
        <end position="24"/>
    </location>
</feature>
<feature type="chain" id="PRO_0000014315" description="Increased recombination centers protein 22">
    <location>
        <begin position="25"/>
        <end position="225"/>
    </location>
</feature>
<feature type="topological domain" description="Lumenal" evidence="1">
    <location>
        <begin position="25"/>
        <end position="169"/>
    </location>
</feature>
<feature type="transmembrane region" description="Helical" evidence="1">
    <location>
        <begin position="170"/>
        <end position="190"/>
    </location>
</feature>
<feature type="topological domain" description="Cytoplasmic" evidence="1">
    <location>
        <begin position="191"/>
        <end position="225"/>
    </location>
</feature>
<feature type="region of interest" description="Disordered" evidence="2">
    <location>
        <begin position="203"/>
        <end position="225"/>
    </location>
</feature>
<feature type="compositionally biased region" description="Basic and acidic residues" evidence="2">
    <location>
        <begin position="212"/>
        <end position="225"/>
    </location>
</feature>
<proteinExistence type="evidence at protein level"/>
<evidence type="ECO:0000255" key="1"/>
<evidence type="ECO:0000256" key="2">
    <source>
        <dbReference type="SAM" id="MobiDB-lite"/>
    </source>
</evidence>
<evidence type="ECO:0000269" key="3">
    <source>
    </source>
</evidence>
<evidence type="ECO:0000269" key="4">
    <source>
    </source>
</evidence>
<evidence type="ECO:0000269" key="5">
    <source>
    </source>
</evidence>
<evidence type="ECO:0000305" key="6"/>
<comment type="function">
    <text>Is probably involved in a pathway contributing to genomic integrity.</text>
</comment>
<comment type="subcellular location">
    <subcellularLocation>
        <location evidence="3">Endoplasmic reticulum membrane</location>
        <topology evidence="3">Single-pass type I membrane protein</topology>
    </subcellularLocation>
</comment>
<comment type="disruption phenotype">
    <text evidence="5">Displays increased levels of spontaneous RAD52 foci in proliferating diploid cells.</text>
</comment>
<comment type="miscellaneous">
    <text evidence="4">Present with 7110 molecules/cell in log phase SD medium.</text>
</comment>
<comment type="similarity">
    <text evidence="6">Belongs to the IRC22 family.</text>
</comment>
<comment type="sequence caution" evidence="6">
    <conflict type="frameshift">
        <sequence resource="EMBL-CDS" id="CAA45869"/>
    </conflict>
</comment>
<dbReference type="EMBL" id="X64582">
    <property type="protein sequence ID" value="CAA45869.1"/>
    <property type="status" value="ALT_FRAME"/>
    <property type="molecule type" value="Genomic_DNA"/>
</dbReference>
<dbReference type="EMBL" id="U18530">
    <property type="protein sequence ID" value="AAB64478.1"/>
    <property type="molecule type" value="Genomic_DNA"/>
</dbReference>
<dbReference type="EMBL" id="AY692686">
    <property type="protein sequence ID" value="AAT92705.1"/>
    <property type="molecule type" value="Genomic_DNA"/>
</dbReference>
<dbReference type="EMBL" id="BK006939">
    <property type="protein sequence ID" value="DAA07650.1"/>
    <property type="molecule type" value="Genomic_DNA"/>
</dbReference>
<dbReference type="PIR" id="S50458">
    <property type="entry name" value="S50458"/>
</dbReference>
<dbReference type="RefSeq" id="NP_010915.1">
    <property type="nucleotide sequence ID" value="NM_001178816.1"/>
</dbReference>
<dbReference type="BioGRID" id="36730">
    <property type="interactions" value="51"/>
</dbReference>
<dbReference type="FunCoup" id="P40006">
    <property type="interactions" value="51"/>
</dbReference>
<dbReference type="MINT" id="P40006"/>
<dbReference type="STRING" id="4932.YEL001C"/>
<dbReference type="PaxDb" id="4932-YEL001C"/>
<dbReference type="PeptideAtlas" id="P40006"/>
<dbReference type="EnsemblFungi" id="YEL001C_mRNA">
    <property type="protein sequence ID" value="YEL001C"/>
    <property type="gene ID" value="YEL001C"/>
</dbReference>
<dbReference type="GeneID" id="856717"/>
<dbReference type="KEGG" id="sce:YEL001C"/>
<dbReference type="AGR" id="SGD:S000000727"/>
<dbReference type="SGD" id="S000000727">
    <property type="gene designation" value="IRC22"/>
</dbReference>
<dbReference type="VEuPathDB" id="FungiDB:YEL001C"/>
<dbReference type="eggNOG" id="ENOG502S3VP">
    <property type="taxonomic scope" value="Eukaryota"/>
</dbReference>
<dbReference type="HOGENOM" id="CLU_078554_1_0_1"/>
<dbReference type="InParanoid" id="P40006"/>
<dbReference type="OMA" id="WLPETYK"/>
<dbReference type="OrthoDB" id="1926781at2759"/>
<dbReference type="BioCyc" id="YEAST:G3O-30131-MONOMER"/>
<dbReference type="BioGRID-ORCS" id="856717">
    <property type="hits" value="1 hit in 10 CRISPR screens"/>
</dbReference>
<dbReference type="PRO" id="PR:P40006"/>
<dbReference type="Proteomes" id="UP000002311">
    <property type="component" value="Chromosome V"/>
</dbReference>
<dbReference type="RNAct" id="P40006">
    <property type="molecule type" value="protein"/>
</dbReference>
<dbReference type="GO" id="GO:0005783">
    <property type="term" value="C:endoplasmic reticulum"/>
    <property type="evidence" value="ECO:0007005"/>
    <property type="project" value="SGD"/>
</dbReference>
<dbReference type="GO" id="GO:0005789">
    <property type="term" value="C:endoplasmic reticulum membrane"/>
    <property type="evidence" value="ECO:0007669"/>
    <property type="project" value="UniProtKB-SubCell"/>
</dbReference>
<dbReference type="InterPro" id="IPR005595">
    <property type="entry name" value="TRAP_alpha"/>
</dbReference>
<dbReference type="Pfam" id="PF03896">
    <property type="entry name" value="TRAP_alpha"/>
    <property type="match status" value="1"/>
</dbReference>
<gene>
    <name type="primary">IRC22</name>
    <name type="ordered locus">YEL001C</name>
</gene>
<name>IRC22_YEAST</name>
<keyword id="KW-0256">Endoplasmic reticulum</keyword>
<keyword id="KW-0472">Membrane</keyword>
<keyword id="KW-1185">Reference proteome</keyword>
<keyword id="KW-0732">Signal</keyword>
<keyword id="KW-0812">Transmembrane</keyword>
<keyword id="KW-1133">Transmembrane helix</keyword>
<accession>P40006</accession>
<accession>D3DLP6</accession>
<accession>Q05243</accession>
<sequence>MRFSMLIGFNLLTALSSFCAAISANNSDNVEHEQEVAEAVAPPSINIEVKYDVVGKESENHDSFLEFYAEDTATLAYNVTNWEDTNITIFGVNGTIVTYPHGYPVADITGASIGPYEMEVNGTSKFGQDVTLNLPEGQYFLIPFLLASRFDEIVRIAAPPTLFEIVSPPISFFNPQFLSVQVIFLAIIGGVSYYYMKSKTNQRPSKKSATVKKVDESWLPETYKK</sequence>
<protein>
    <recommendedName>
        <fullName>Increased recombination centers protein 22</fullName>
    </recommendedName>
</protein>
<reference key="1">
    <citation type="journal article" date="1992" name="Yeast">
        <title>Genetic and physical mapping of the WBP1 locus close to CENV.</title>
        <authorList>
            <person name="te Heesen S."/>
            <person name="Aebi M."/>
        </authorList>
    </citation>
    <scope>NUCLEOTIDE SEQUENCE [GENOMIC DNA]</scope>
</reference>
<reference key="2">
    <citation type="journal article" date="1997" name="Nature">
        <title>The nucleotide sequence of Saccharomyces cerevisiae chromosome V.</title>
        <authorList>
            <person name="Dietrich F.S."/>
            <person name="Mulligan J.T."/>
            <person name="Hennessy K.M."/>
            <person name="Yelton M.A."/>
            <person name="Allen E."/>
            <person name="Araujo R."/>
            <person name="Aviles E."/>
            <person name="Berno A."/>
            <person name="Brennan T."/>
            <person name="Carpenter J."/>
            <person name="Chen E."/>
            <person name="Cherry J.M."/>
            <person name="Chung E."/>
            <person name="Duncan M."/>
            <person name="Guzman E."/>
            <person name="Hartzell G."/>
            <person name="Hunicke-Smith S."/>
            <person name="Hyman R.W."/>
            <person name="Kayser A."/>
            <person name="Komp C."/>
            <person name="Lashkari D."/>
            <person name="Lew H."/>
            <person name="Lin D."/>
            <person name="Mosedale D."/>
            <person name="Nakahara K."/>
            <person name="Namath A."/>
            <person name="Norgren R."/>
            <person name="Oefner P."/>
            <person name="Oh C."/>
            <person name="Petel F.X."/>
            <person name="Roberts D."/>
            <person name="Sehl P."/>
            <person name="Schramm S."/>
            <person name="Shogren T."/>
            <person name="Smith V."/>
            <person name="Taylor P."/>
            <person name="Wei Y."/>
            <person name="Botstein D."/>
            <person name="Davis R.W."/>
        </authorList>
    </citation>
    <scope>NUCLEOTIDE SEQUENCE [LARGE SCALE GENOMIC DNA]</scope>
    <source>
        <strain>ATCC 204508 / S288c</strain>
    </source>
</reference>
<reference key="3">
    <citation type="journal article" date="2014" name="G3 (Bethesda)">
        <title>The reference genome sequence of Saccharomyces cerevisiae: Then and now.</title>
        <authorList>
            <person name="Engel S.R."/>
            <person name="Dietrich F.S."/>
            <person name="Fisk D.G."/>
            <person name="Binkley G."/>
            <person name="Balakrishnan R."/>
            <person name="Costanzo M.C."/>
            <person name="Dwight S.S."/>
            <person name="Hitz B.C."/>
            <person name="Karra K."/>
            <person name="Nash R.S."/>
            <person name="Weng S."/>
            <person name="Wong E.D."/>
            <person name="Lloyd P."/>
            <person name="Skrzypek M.S."/>
            <person name="Miyasato S.R."/>
            <person name="Simison M."/>
            <person name="Cherry J.M."/>
        </authorList>
    </citation>
    <scope>GENOME REANNOTATION</scope>
    <source>
        <strain>ATCC 204508 / S288c</strain>
    </source>
</reference>
<reference key="4">
    <citation type="journal article" date="2007" name="Genome Res.">
        <title>Approaching a complete repository of sequence-verified protein-encoding clones for Saccharomyces cerevisiae.</title>
        <authorList>
            <person name="Hu Y."/>
            <person name="Rolfs A."/>
            <person name="Bhullar B."/>
            <person name="Murthy T.V.S."/>
            <person name="Zhu C."/>
            <person name="Berger M.F."/>
            <person name="Camargo A.A."/>
            <person name="Kelley F."/>
            <person name="McCarron S."/>
            <person name="Jepson D."/>
            <person name="Richardson A."/>
            <person name="Raphael J."/>
            <person name="Moreira D."/>
            <person name="Taycher E."/>
            <person name="Zuo D."/>
            <person name="Mohr S."/>
            <person name="Kane M.F."/>
            <person name="Williamson J."/>
            <person name="Simpson A.J.G."/>
            <person name="Bulyk M.L."/>
            <person name="Harlow E."/>
            <person name="Marsischky G."/>
            <person name="Kolodner R.D."/>
            <person name="LaBaer J."/>
        </authorList>
    </citation>
    <scope>NUCLEOTIDE SEQUENCE [GENOMIC DNA]</scope>
    <source>
        <strain>ATCC 204508 / S288c</strain>
    </source>
</reference>
<reference key="5">
    <citation type="journal article" date="2003" name="Nature">
        <title>Global analysis of protein localization in budding yeast.</title>
        <authorList>
            <person name="Huh W.-K."/>
            <person name="Falvo J.V."/>
            <person name="Gerke L.C."/>
            <person name="Carroll A.S."/>
            <person name="Howson R.W."/>
            <person name="Weissman J.S."/>
            <person name="O'Shea E.K."/>
        </authorList>
    </citation>
    <scope>SUBCELLULAR LOCATION [LARGE SCALE ANALYSIS]</scope>
</reference>
<reference key="6">
    <citation type="journal article" date="2003" name="Nature">
        <title>Global analysis of protein expression in yeast.</title>
        <authorList>
            <person name="Ghaemmaghami S."/>
            <person name="Huh W.-K."/>
            <person name="Bower K."/>
            <person name="Howson R.W."/>
            <person name="Belle A."/>
            <person name="Dephoure N."/>
            <person name="O'Shea E.K."/>
            <person name="Weissman J.S."/>
        </authorList>
    </citation>
    <scope>LEVEL OF PROTEIN EXPRESSION [LARGE SCALE ANALYSIS]</scope>
</reference>
<reference key="7">
    <citation type="journal article" date="2007" name="PLoS Genet.">
        <title>Genome-wide analysis of Rad52 foci reveals diverse mechanisms impacting recombination.</title>
        <authorList>
            <person name="Alvaro D."/>
            <person name="Lisby M."/>
            <person name="Rothstein R."/>
        </authorList>
    </citation>
    <scope>DISRUPTION PHENOTYPE</scope>
</reference>
<organism>
    <name type="scientific">Saccharomyces cerevisiae (strain ATCC 204508 / S288c)</name>
    <name type="common">Baker's yeast</name>
    <dbReference type="NCBI Taxonomy" id="559292"/>
    <lineage>
        <taxon>Eukaryota</taxon>
        <taxon>Fungi</taxon>
        <taxon>Dikarya</taxon>
        <taxon>Ascomycota</taxon>
        <taxon>Saccharomycotina</taxon>
        <taxon>Saccharomycetes</taxon>
        <taxon>Saccharomycetales</taxon>
        <taxon>Saccharomycetaceae</taxon>
        <taxon>Saccharomyces</taxon>
    </lineage>
</organism>